<evidence type="ECO:0000255" key="1">
    <source>
        <dbReference type="HAMAP-Rule" id="MF_00181"/>
    </source>
</evidence>
<name>AMPA_BURO1</name>
<keyword id="KW-0031">Aminopeptidase</keyword>
<keyword id="KW-0963">Cytoplasm</keyword>
<keyword id="KW-0378">Hydrolase</keyword>
<keyword id="KW-0464">Manganese</keyword>
<keyword id="KW-0479">Metal-binding</keyword>
<keyword id="KW-0645">Protease</keyword>
<sequence>MDFSIKGCDWSKGEAKGFLTGKSDCIVLGIFEAQTLSGAALDIDTATKGLISRVVKAGDMDGKRGKTLFLHEVSGIGASRVLLVGLGKQDAFNQKAYNDAATTAWRALLATKVVQVTFSLAQLPVDERSSDWGVRAAILALRNETYRFTQMKSKPEPASHTLKRVVFSVDPADEKAAKVAIKQAVALANGMDLTRDLGNLPGNVCTPIYLGNTAKKIAKDWGLKAEVLGLKQIQALKMGSFLSVARASVEPPQFIVLHYQGAAAKAAPVVLVGKGITFDTGGISLKPGEGMDEMKYDMCGAGSVLGTMRAVAEMGLKINVVAIVPTCENMPGGNATKPGDIVTSMKGLTIEVLNTDAEGRLILCDALTYAERFKPAAVIDVATLTGACVIALGGHNSGLFSTNDALAGELLDASREANDPAWRMPLDDEYQDQLKSNFADLANIGGRPAGAVTAACFLSRFTESYPWAHLDIAGTAWKGGAAKGATGRPVPLLAQFLIDRAGQ</sequence>
<feature type="chain" id="PRO_1000019889" description="Probable cytosol aminopeptidase">
    <location>
        <begin position="1"/>
        <end position="503"/>
    </location>
</feature>
<feature type="active site" evidence="1">
    <location>
        <position position="286"/>
    </location>
</feature>
<feature type="active site" evidence="1">
    <location>
        <position position="360"/>
    </location>
</feature>
<feature type="binding site" evidence="1">
    <location>
        <position position="274"/>
    </location>
    <ligand>
        <name>Mn(2+)</name>
        <dbReference type="ChEBI" id="CHEBI:29035"/>
        <label>2</label>
    </ligand>
</feature>
<feature type="binding site" evidence="1">
    <location>
        <position position="279"/>
    </location>
    <ligand>
        <name>Mn(2+)</name>
        <dbReference type="ChEBI" id="CHEBI:29035"/>
        <label>1</label>
    </ligand>
</feature>
<feature type="binding site" evidence="1">
    <location>
        <position position="279"/>
    </location>
    <ligand>
        <name>Mn(2+)</name>
        <dbReference type="ChEBI" id="CHEBI:29035"/>
        <label>2</label>
    </ligand>
</feature>
<feature type="binding site" evidence="1">
    <location>
        <position position="297"/>
    </location>
    <ligand>
        <name>Mn(2+)</name>
        <dbReference type="ChEBI" id="CHEBI:29035"/>
        <label>2</label>
    </ligand>
</feature>
<feature type="binding site" evidence="1">
    <location>
        <position position="356"/>
    </location>
    <ligand>
        <name>Mn(2+)</name>
        <dbReference type="ChEBI" id="CHEBI:29035"/>
        <label>1</label>
    </ligand>
</feature>
<feature type="binding site" evidence="1">
    <location>
        <position position="358"/>
    </location>
    <ligand>
        <name>Mn(2+)</name>
        <dbReference type="ChEBI" id="CHEBI:29035"/>
        <label>1</label>
    </ligand>
</feature>
<feature type="binding site" evidence="1">
    <location>
        <position position="358"/>
    </location>
    <ligand>
        <name>Mn(2+)</name>
        <dbReference type="ChEBI" id="CHEBI:29035"/>
        <label>2</label>
    </ligand>
</feature>
<accession>Q1BUE7</accession>
<dbReference type="EC" id="3.4.11.1" evidence="1"/>
<dbReference type="EC" id="3.4.11.10" evidence="1"/>
<dbReference type="EMBL" id="CP000378">
    <property type="protein sequence ID" value="ABF76758.1"/>
    <property type="molecule type" value="Genomic_DNA"/>
</dbReference>
<dbReference type="SMR" id="Q1BUE7"/>
<dbReference type="MEROPS" id="M17.003"/>
<dbReference type="HOGENOM" id="CLU_013734_2_2_4"/>
<dbReference type="GO" id="GO:0005737">
    <property type="term" value="C:cytoplasm"/>
    <property type="evidence" value="ECO:0007669"/>
    <property type="project" value="UniProtKB-SubCell"/>
</dbReference>
<dbReference type="GO" id="GO:0030145">
    <property type="term" value="F:manganese ion binding"/>
    <property type="evidence" value="ECO:0007669"/>
    <property type="project" value="UniProtKB-UniRule"/>
</dbReference>
<dbReference type="GO" id="GO:0070006">
    <property type="term" value="F:metalloaminopeptidase activity"/>
    <property type="evidence" value="ECO:0007669"/>
    <property type="project" value="InterPro"/>
</dbReference>
<dbReference type="GO" id="GO:0006508">
    <property type="term" value="P:proteolysis"/>
    <property type="evidence" value="ECO:0007669"/>
    <property type="project" value="UniProtKB-KW"/>
</dbReference>
<dbReference type="CDD" id="cd00433">
    <property type="entry name" value="Peptidase_M17"/>
    <property type="match status" value="1"/>
</dbReference>
<dbReference type="FunFam" id="3.40.630.10:FF:000004">
    <property type="entry name" value="Probable cytosol aminopeptidase"/>
    <property type="match status" value="1"/>
</dbReference>
<dbReference type="Gene3D" id="3.40.220.10">
    <property type="entry name" value="Leucine Aminopeptidase, subunit E, domain 1"/>
    <property type="match status" value="1"/>
</dbReference>
<dbReference type="Gene3D" id="3.40.630.10">
    <property type="entry name" value="Zn peptidases"/>
    <property type="match status" value="1"/>
</dbReference>
<dbReference type="HAMAP" id="MF_00181">
    <property type="entry name" value="Cytosol_peptidase_M17"/>
    <property type="match status" value="1"/>
</dbReference>
<dbReference type="InterPro" id="IPR011356">
    <property type="entry name" value="Leucine_aapep/pepB"/>
</dbReference>
<dbReference type="InterPro" id="IPR043472">
    <property type="entry name" value="Macro_dom-like"/>
</dbReference>
<dbReference type="InterPro" id="IPR000819">
    <property type="entry name" value="Peptidase_M17_C"/>
</dbReference>
<dbReference type="InterPro" id="IPR023042">
    <property type="entry name" value="Peptidase_M17_leu_NH2_pept"/>
</dbReference>
<dbReference type="InterPro" id="IPR008283">
    <property type="entry name" value="Peptidase_M17_N"/>
</dbReference>
<dbReference type="NCBIfam" id="NF002073">
    <property type="entry name" value="PRK00913.1-2"/>
    <property type="match status" value="1"/>
</dbReference>
<dbReference type="NCBIfam" id="NF002074">
    <property type="entry name" value="PRK00913.1-4"/>
    <property type="match status" value="1"/>
</dbReference>
<dbReference type="NCBIfam" id="NF002077">
    <property type="entry name" value="PRK00913.2-4"/>
    <property type="match status" value="1"/>
</dbReference>
<dbReference type="NCBIfam" id="NF002083">
    <property type="entry name" value="PRK00913.3-5"/>
    <property type="match status" value="1"/>
</dbReference>
<dbReference type="PANTHER" id="PTHR11963:SF23">
    <property type="entry name" value="CYTOSOL AMINOPEPTIDASE"/>
    <property type="match status" value="1"/>
</dbReference>
<dbReference type="PANTHER" id="PTHR11963">
    <property type="entry name" value="LEUCINE AMINOPEPTIDASE-RELATED"/>
    <property type="match status" value="1"/>
</dbReference>
<dbReference type="Pfam" id="PF00883">
    <property type="entry name" value="Peptidase_M17"/>
    <property type="match status" value="1"/>
</dbReference>
<dbReference type="Pfam" id="PF02789">
    <property type="entry name" value="Peptidase_M17_N"/>
    <property type="match status" value="1"/>
</dbReference>
<dbReference type="PRINTS" id="PR00481">
    <property type="entry name" value="LAMNOPPTDASE"/>
</dbReference>
<dbReference type="SUPFAM" id="SSF52949">
    <property type="entry name" value="Macro domain-like"/>
    <property type="match status" value="1"/>
</dbReference>
<dbReference type="SUPFAM" id="SSF53187">
    <property type="entry name" value="Zn-dependent exopeptidases"/>
    <property type="match status" value="1"/>
</dbReference>
<dbReference type="PROSITE" id="PS00631">
    <property type="entry name" value="CYTOSOL_AP"/>
    <property type="match status" value="1"/>
</dbReference>
<protein>
    <recommendedName>
        <fullName evidence="1">Probable cytosol aminopeptidase</fullName>
        <ecNumber evidence="1">3.4.11.1</ecNumber>
    </recommendedName>
    <alternativeName>
        <fullName evidence="1">Leucine aminopeptidase</fullName>
        <shortName evidence="1">LAP</shortName>
        <ecNumber evidence="1">3.4.11.10</ecNumber>
    </alternativeName>
    <alternativeName>
        <fullName evidence="1">Leucyl aminopeptidase</fullName>
    </alternativeName>
</protein>
<reference key="1">
    <citation type="submission" date="2006-05" db="EMBL/GenBank/DDBJ databases">
        <title>Complete sequence of chromosome 1 of Burkholderia cenocepacia AU 1054.</title>
        <authorList>
            <consortium name="US DOE Joint Genome Institute"/>
            <person name="Copeland A."/>
            <person name="Lucas S."/>
            <person name="Lapidus A."/>
            <person name="Barry K."/>
            <person name="Detter J.C."/>
            <person name="Glavina del Rio T."/>
            <person name="Hammon N."/>
            <person name="Israni S."/>
            <person name="Dalin E."/>
            <person name="Tice H."/>
            <person name="Pitluck S."/>
            <person name="Chain P."/>
            <person name="Malfatti S."/>
            <person name="Shin M."/>
            <person name="Vergez L."/>
            <person name="Schmutz J."/>
            <person name="Larimer F."/>
            <person name="Land M."/>
            <person name="Hauser L."/>
            <person name="Kyrpides N."/>
            <person name="Lykidis A."/>
            <person name="LiPuma J.J."/>
            <person name="Konstantinidis K."/>
            <person name="Tiedje J.M."/>
            <person name="Richardson P."/>
        </authorList>
    </citation>
    <scope>NUCLEOTIDE SEQUENCE [LARGE SCALE GENOMIC DNA]</scope>
    <source>
        <strain>AU 1054</strain>
    </source>
</reference>
<gene>
    <name evidence="1" type="primary">pepA</name>
    <name type="ordered locus">Bcen_1855</name>
</gene>
<organism>
    <name type="scientific">Burkholderia orbicola (strain AU 1054)</name>
    <dbReference type="NCBI Taxonomy" id="331271"/>
    <lineage>
        <taxon>Bacteria</taxon>
        <taxon>Pseudomonadati</taxon>
        <taxon>Pseudomonadota</taxon>
        <taxon>Betaproteobacteria</taxon>
        <taxon>Burkholderiales</taxon>
        <taxon>Burkholderiaceae</taxon>
        <taxon>Burkholderia</taxon>
        <taxon>Burkholderia cepacia complex</taxon>
        <taxon>Burkholderia orbicola</taxon>
    </lineage>
</organism>
<proteinExistence type="inferred from homology"/>
<comment type="function">
    <text evidence="1">Presumably involved in the processing and regular turnover of intracellular proteins. Catalyzes the removal of unsubstituted N-terminal amino acids from various peptides.</text>
</comment>
<comment type="catalytic activity">
    <reaction evidence="1">
        <text>Release of an N-terminal amino acid, Xaa-|-Yaa-, in which Xaa is preferably Leu, but may be other amino acids including Pro although not Arg or Lys, and Yaa may be Pro. Amino acid amides and methyl esters are also readily hydrolyzed, but rates on arylamides are exceedingly low.</text>
        <dbReference type="EC" id="3.4.11.1"/>
    </reaction>
</comment>
<comment type="catalytic activity">
    <reaction evidence="1">
        <text>Release of an N-terminal amino acid, preferentially leucine, but not glutamic or aspartic acids.</text>
        <dbReference type="EC" id="3.4.11.10"/>
    </reaction>
</comment>
<comment type="cofactor">
    <cofactor evidence="1">
        <name>Mn(2+)</name>
        <dbReference type="ChEBI" id="CHEBI:29035"/>
    </cofactor>
    <text evidence="1">Binds 2 manganese ions per subunit.</text>
</comment>
<comment type="subcellular location">
    <subcellularLocation>
        <location evidence="1">Cytoplasm</location>
    </subcellularLocation>
</comment>
<comment type="similarity">
    <text evidence="1">Belongs to the peptidase M17 family.</text>
</comment>